<name>HFQ_SALSV</name>
<keyword id="KW-0694">RNA-binding</keyword>
<keyword id="KW-0346">Stress response</keyword>
<accession>B4TSF2</accession>
<comment type="function">
    <text evidence="1">RNA chaperone that binds small regulatory RNA (sRNAs) and mRNAs to facilitate mRNA translational regulation in response to envelope stress, environmental stress and changes in metabolite concentrations. Also binds with high specificity to tRNAs.</text>
</comment>
<comment type="subunit">
    <text evidence="1">Homohexamer.</text>
</comment>
<comment type="similarity">
    <text evidence="1">Belongs to the Hfq family.</text>
</comment>
<evidence type="ECO:0000255" key="1">
    <source>
        <dbReference type="HAMAP-Rule" id="MF_00436"/>
    </source>
</evidence>
<evidence type="ECO:0000255" key="2">
    <source>
        <dbReference type="PROSITE-ProRule" id="PRU01346"/>
    </source>
</evidence>
<evidence type="ECO:0000256" key="3">
    <source>
        <dbReference type="SAM" id="MobiDB-lite"/>
    </source>
</evidence>
<gene>
    <name evidence="1" type="primary">hfq</name>
    <name type="ordered locus">SeSA_A4629</name>
</gene>
<proteinExistence type="inferred from homology"/>
<sequence>MAKGQSLQDPFLNALRRERVPVSIYLVNGIKLQGQIESFDQFVILLKNTVSQMVYKHAISTVVPSRPVSHHSNNAGGGASNNYHHGSNAQGSTAQQDSEETE</sequence>
<dbReference type="EMBL" id="CP001127">
    <property type="protein sequence ID" value="ACF91415.1"/>
    <property type="molecule type" value="Genomic_DNA"/>
</dbReference>
<dbReference type="RefSeq" id="WP_001051875.1">
    <property type="nucleotide sequence ID" value="NC_011094.1"/>
</dbReference>
<dbReference type="SMR" id="B4TSF2"/>
<dbReference type="KEGG" id="sew:SeSA_A4629"/>
<dbReference type="HOGENOM" id="CLU_113688_2_1_6"/>
<dbReference type="Proteomes" id="UP000001865">
    <property type="component" value="Chromosome"/>
</dbReference>
<dbReference type="GO" id="GO:0005829">
    <property type="term" value="C:cytosol"/>
    <property type="evidence" value="ECO:0007669"/>
    <property type="project" value="TreeGrafter"/>
</dbReference>
<dbReference type="GO" id="GO:0003723">
    <property type="term" value="F:RNA binding"/>
    <property type="evidence" value="ECO:0007669"/>
    <property type="project" value="UniProtKB-UniRule"/>
</dbReference>
<dbReference type="GO" id="GO:0006355">
    <property type="term" value="P:regulation of DNA-templated transcription"/>
    <property type="evidence" value="ECO:0007669"/>
    <property type="project" value="InterPro"/>
</dbReference>
<dbReference type="GO" id="GO:0043487">
    <property type="term" value="P:regulation of RNA stability"/>
    <property type="evidence" value="ECO:0007669"/>
    <property type="project" value="TreeGrafter"/>
</dbReference>
<dbReference type="GO" id="GO:0045974">
    <property type="term" value="P:regulation of translation, ncRNA-mediated"/>
    <property type="evidence" value="ECO:0007669"/>
    <property type="project" value="TreeGrafter"/>
</dbReference>
<dbReference type="CDD" id="cd01716">
    <property type="entry name" value="Hfq"/>
    <property type="match status" value="1"/>
</dbReference>
<dbReference type="FunFam" id="2.30.30.100:FF:000001">
    <property type="entry name" value="RNA-binding protein Hfq"/>
    <property type="match status" value="1"/>
</dbReference>
<dbReference type="Gene3D" id="2.30.30.100">
    <property type="match status" value="1"/>
</dbReference>
<dbReference type="HAMAP" id="MF_00436">
    <property type="entry name" value="Hfq"/>
    <property type="match status" value="1"/>
</dbReference>
<dbReference type="InterPro" id="IPR005001">
    <property type="entry name" value="Hfq"/>
</dbReference>
<dbReference type="InterPro" id="IPR010920">
    <property type="entry name" value="LSM_dom_sf"/>
</dbReference>
<dbReference type="InterPro" id="IPR047575">
    <property type="entry name" value="Sm"/>
</dbReference>
<dbReference type="NCBIfam" id="TIGR02383">
    <property type="entry name" value="Hfq"/>
    <property type="match status" value="1"/>
</dbReference>
<dbReference type="NCBIfam" id="NF001602">
    <property type="entry name" value="PRK00395.1"/>
    <property type="match status" value="1"/>
</dbReference>
<dbReference type="PANTHER" id="PTHR34772">
    <property type="entry name" value="RNA-BINDING PROTEIN HFQ"/>
    <property type="match status" value="1"/>
</dbReference>
<dbReference type="PANTHER" id="PTHR34772:SF1">
    <property type="entry name" value="RNA-BINDING PROTEIN HFQ"/>
    <property type="match status" value="1"/>
</dbReference>
<dbReference type="Pfam" id="PF17209">
    <property type="entry name" value="Hfq"/>
    <property type="match status" value="1"/>
</dbReference>
<dbReference type="SUPFAM" id="SSF50182">
    <property type="entry name" value="Sm-like ribonucleoproteins"/>
    <property type="match status" value="1"/>
</dbReference>
<dbReference type="PROSITE" id="PS52002">
    <property type="entry name" value="SM"/>
    <property type="match status" value="1"/>
</dbReference>
<feature type="chain" id="PRO_1000190358" description="RNA-binding protein Hfq">
    <location>
        <begin position="1"/>
        <end position="102"/>
    </location>
</feature>
<feature type="domain" description="Sm" evidence="2">
    <location>
        <begin position="9"/>
        <end position="68"/>
    </location>
</feature>
<feature type="region of interest" description="Disordered" evidence="3">
    <location>
        <begin position="63"/>
        <end position="102"/>
    </location>
</feature>
<feature type="compositionally biased region" description="Low complexity" evidence="3">
    <location>
        <begin position="70"/>
        <end position="88"/>
    </location>
</feature>
<protein>
    <recommendedName>
        <fullName evidence="1">RNA-binding protein Hfq</fullName>
    </recommendedName>
</protein>
<reference key="1">
    <citation type="journal article" date="2011" name="J. Bacteriol.">
        <title>Comparative genomics of 28 Salmonella enterica isolates: evidence for CRISPR-mediated adaptive sublineage evolution.</title>
        <authorList>
            <person name="Fricke W.F."/>
            <person name="Mammel M.K."/>
            <person name="McDermott P.F."/>
            <person name="Tartera C."/>
            <person name="White D.G."/>
            <person name="Leclerc J.E."/>
            <person name="Ravel J."/>
            <person name="Cebula T.A."/>
        </authorList>
    </citation>
    <scope>NUCLEOTIDE SEQUENCE [LARGE SCALE GENOMIC DNA]</scope>
    <source>
        <strain>CVM19633</strain>
    </source>
</reference>
<organism>
    <name type="scientific">Salmonella schwarzengrund (strain CVM19633)</name>
    <dbReference type="NCBI Taxonomy" id="439843"/>
    <lineage>
        <taxon>Bacteria</taxon>
        <taxon>Pseudomonadati</taxon>
        <taxon>Pseudomonadota</taxon>
        <taxon>Gammaproteobacteria</taxon>
        <taxon>Enterobacterales</taxon>
        <taxon>Enterobacteriaceae</taxon>
        <taxon>Salmonella</taxon>
    </lineage>
</organism>